<reference key="1">
    <citation type="submission" date="2007-02" db="EMBL/GenBank/DDBJ databases">
        <title>Complete sequence of chromosome of Yersinia pestis Pestoides F.</title>
        <authorList>
            <consortium name="US DOE Joint Genome Institute"/>
            <person name="Copeland A."/>
            <person name="Lucas S."/>
            <person name="Lapidus A."/>
            <person name="Barry K."/>
            <person name="Detter J.C."/>
            <person name="Glavina del Rio T."/>
            <person name="Hammon N."/>
            <person name="Israni S."/>
            <person name="Dalin E."/>
            <person name="Tice H."/>
            <person name="Pitluck S."/>
            <person name="Di Bartolo G."/>
            <person name="Chain P."/>
            <person name="Malfatti S."/>
            <person name="Shin M."/>
            <person name="Vergez L."/>
            <person name="Schmutz J."/>
            <person name="Larimer F."/>
            <person name="Land M."/>
            <person name="Hauser L."/>
            <person name="Worsham P."/>
            <person name="Chu M."/>
            <person name="Bearden S."/>
            <person name="Garcia E."/>
            <person name="Richardson P."/>
        </authorList>
    </citation>
    <scope>NUCLEOTIDE SEQUENCE [LARGE SCALE GENOMIC DNA]</scope>
    <source>
        <strain>Pestoides F</strain>
    </source>
</reference>
<sequence length="233" mass="24459">MSNLSNLRHKLQNGLIASCQPVPGSAMDTPEIVAAMACAALAGGAVGLRIEGISNIQAVRRATDAPIIGIIKRDLPDSEVRITPWLEDIDALSAAGADIIAFDVTCRERPVSVADLYQRARATGCLTMADASNIDDGLLAHHLGIDFIGTTLSGYTQATVPTEPDLALVTQLAQAGCRVIAEGRYHSPALAAAAISAGAYAVTVGSAITRIEHICGWFCDAIKQCETEKLTEY</sequence>
<keyword id="KW-0119">Carbohydrate metabolism</keyword>
<keyword id="KW-0413">Isomerase</keyword>
<feature type="chain" id="PRO_0000301501" description="Putative N-acetylmannosamine-6-phosphate 2-epimerase">
    <location>
        <begin position="1"/>
        <end position="233"/>
    </location>
</feature>
<accession>A4TMJ5</accession>
<dbReference type="EC" id="5.1.3.9" evidence="1"/>
<dbReference type="EMBL" id="CP000668">
    <property type="protein sequence ID" value="ABP40507.1"/>
    <property type="molecule type" value="Genomic_DNA"/>
</dbReference>
<dbReference type="SMR" id="A4TMJ5"/>
<dbReference type="KEGG" id="ypp:YPDSF_2128"/>
<dbReference type="PATRIC" id="fig|386656.14.peg.3605"/>
<dbReference type="UniPathway" id="UPA00629">
    <property type="reaction ID" value="UER00682"/>
</dbReference>
<dbReference type="GO" id="GO:0005829">
    <property type="term" value="C:cytosol"/>
    <property type="evidence" value="ECO:0007669"/>
    <property type="project" value="TreeGrafter"/>
</dbReference>
<dbReference type="GO" id="GO:0047465">
    <property type="term" value="F:N-acylglucosamine-6-phosphate 2-epimerase activity"/>
    <property type="evidence" value="ECO:0007669"/>
    <property type="project" value="UniProtKB-EC"/>
</dbReference>
<dbReference type="GO" id="GO:0005975">
    <property type="term" value="P:carbohydrate metabolic process"/>
    <property type="evidence" value="ECO:0007669"/>
    <property type="project" value="UniProtKB-UniRule"/>
</dbReference>
<dbReference type="GO" id="GO:0006053">
    <property type="term" value="P:N-acetylmannosamine catabolic process"/>
    <property type="evidence" value="ECO:0007669"/>
    <property type="project" value="TreeGrafter"/>
</dbReference>
<dbReference type="GO" id="GO:0019262">
    <property type="term" value="P:N-acetylneuraminate catabolic process"/>
    <property type="evidence" value="ECO:0007669"/>
    <property type="project" value="UniProtKB-UniRule"/>
</dbReference>
<dbReference type="CDD" id="cd04729">
    <property type="entry name" value="NanE"/>
    <property type="match status" value="1"/>
</dbReference>
<dbReference type="FunFam" id="3.20.20.70:FF:000035">
    <property type="entry name" value="Putative N-acetylmannosamine-6-phosphate 2-epimerase"/>
    <property type="match status" value="1"/>
</dbReference>
<dbReference type="Gene3D" id="3.20.20.70">
    <property type="entry name" value="Aldolase class I"/>
    <property type="match status" value="1"/>
</dbReference>
<dbReference type="HAMAP" id="MF_01235">
    <property type="entry name" value="ManNAc6P_epimer"/>
    <property type="match status" value="1"/>
</dbReference>
<dbReference type="InterPro" id="IPR013785">
    <property type="entry name" value="Aldolase_TIM"/>
</dbReference>
<dbReference type="InterPro" id="IPR007260">
    <property type="entry name" value="NanE"/>
</dbReference>
<dbReference type="InterPro" id="IPR011060">
    <property type="entry name" value="RibuloseP-bd_barrel"/>
</dbReference>
<dbReference type="NCBIfam" id="NF002231">
    <property type="entry name" value="PRK01130.1"/>
    <property type="match status" value="1"/>
</dbReference>
<dbReference type="PANTHER" id="PTHR36204">
    <property type="entry name" value="N-ACETYLMANNOSAMINE-6-PHOSPHATE 2-EPIMERASE-RELATED"/>
    <property type="match status" value="1"/>
</dbReference>
<dbReference type="PANTHER" id="PTHR36204:SF1">
    <property type="entry name" value="N-ACETYLMANNOSAMINE-6-PHOSPHATE 2-EPIMERASE-RELATED"/>
    <property type="match status" value="1"/>
</dbReference>
<dbReference type="Pfam" id="PF04131">
    <property type="entry name" value="NanE"/>
    <property type="match status" value="1"/>
</dbReference>
<dbReference type="SUPFAM" id="SSF51366">
    <property type="entry name" value="Ribulose-phoshate binding barrel"/>
    <property type="match status" value="1"/>
</dbReference>
<organism>
    <name type="scientific">Yersinia pestis (strain Pestoides F)</name>
    <dbReference type="NCBI Taxonomy" id="386656"/>
    <lineage>
        <taxon>Bacteria</taxon>
        <taxon>Pseudomonadati</taxon>
        <taxon>Pseudomonadota</taxon>
        <taxon>Gammaproteobacteria</taxon>
        <taxon>Enterobacterales</taxon>
        <taxon>Yersiniaceae</taxon>
        <taxon>Yersinia</taxon>
    </lineage>
</organism>
<comment type="function">
    <text evidence="1">Converts N-acetylmannosamine-6-phosphate (ManNAc-6-P) to N-acetylglucosamine-6-phosphate (GlcNAc-6-P).</text>
</comment>
<comment type="catalytic activity">
    <reaction evidence="1">
        <text>an N-acyl-D-glucosamine 6-phosphate = an N-acyl-D-mannosamine 6-phosphate</text>
        <dbReference type="Rhea" id="RHEA:23932"/>
        <dbReference type="ChEBI" id="CHEBI:57599"/>
        <dbReference type="ChEBI" id="CHEBI:57666"/>
        <dbReference type="EC" id="5.1.3.9"/>
    </reaction>
</comment>
<comment type="pathway">
    <text evidence="1">Amino-sugar metabolism; N-acetylneuraminate degradation; D-fructose 6-phosphate from N-acetylneuraminate: step 3/5.</text>
</comment>
<comment type="similarity">
    <text evidence="1">Belongs to the NanE family.</text>
</comment>
<protein>
    <recommendedName>
        <fullName evidence="1">Putative N-acetylmannosamine-6-phosphate 2-epimerase</fullName>
        <ecNumber evidence="1">5.1.3.9</ecNumber>
    </recommendedName>
    <alternativeName>
        <fullName evidence="1">ManNAc-6-P epimerase</fullName>
    </alternativeName>
</protein>
<proteinExistence type="inferred from homology"/>
<evidence type="ECO:0000255" key="1">
    <source>
        <dbReference type="HAMAP-Rule" id="MF_01235"/>
    </source>
</evidence>
<name>NANE_YERPP</name>
<gene>
    <name evidence="1" type="primary">nanE</name>
    <name type="ordered locus">YPDSF_2128</name>
</gene>